<protein>
    <recommendedName>
        <fullName>Protein Optix</fullName>
    </recommendedName>
    <alternativeName>
        <fullName>Homeobox protein SIX3</fullName>
        <shortName>D-Six3</shortName>
    </alternativeName>
</protein>
<feature type="chain" id="PRO_0000049202" description="Protein Optix">
    <location>
        <begin position="1"/>
        <end position="487"/>
    </location>
</feature>
<feature type="DNA-binding region" description="Homeobox" evidence="1">
    <location>
        <begin position="154"/>
        <end position="214"/>
    </location>
</feature>
<feature type="region of interest" description="Disordered" evidence="2">
    <location>
        <begin position="182"/>
        <end position="330"/>
    </location>
</feature>
<feature type="region of interest" description="Disordered" evidence="2">
    <location>
        <begin position="443"/>
        <end position="463"/>
    </location>
</feature>
<feature type="compositionally biased region" description="Polar residues" evidence="2">
    <location>
        <begin position="255"/>
        <end position="277"/>
    </location>
</feature>
<feature type="compositionally biased region" description="Basic and acidic residues" evidence="2">
    <location>
        <begin position="278"/>
        <end position="293"/>
    </location>
</feature>
<feature type="compositionally biased region" description="Low complexity" evidence="2">
    <location>
        <begin position="294"/>
        <end position="312"/>
    </location>
</feature>
<feature type="compositionally biased region" description="Gly residues" evidence="2">
    <location>
        <begin position="321"/>
        <end position="330"/>
    </location>
</feature>
<feature type="splice variant" id="VSP_002259" description="In isoform C." evidence="6">
    <location>
        <begin position="1"/>
        <end position="228"/>
    </location>
</feature>
<feature type="splice variant" id="VSP_002258" description="In isoform B." evidence="5">
    <location>
        <begin position="221"/>
        <end position="382"/>
    </location>
</feature>
<feature type="sequence conflict" description="In Ref. 1; AAD39863." evidence="7" ref="1">
    <original>G</original>
    <variation>R</variation>
    <location>
        <position position="446"/>
    </location>
</feature>
<feature type="sequence conflict" description="In Ref. 1; AAD39863." evidence="7" ref="1">
    <location>
        <begin position="455"/>
        <end position="487"/>
    </location>
</feature>
<name>OPTIX_DROME</name>
<sequence>MAVGPTEGKQPPSESFSPTHHQIIAPSPILAVPTLAFSAAQVEIVCKTLEDSGDIERLARFLWSLPVALPNMHEILNCEAVLRARAVVAYHVGNFRELYAIIENHKFTKASYGKLQAMWLEAHYIEAEKLRGRSLGPVDKYRVRKKFPLPPTIWDGEQKTHCFKERTRSLLREWYLQDPYPNPTKKRELAKATGLNPTQVGNWFKNRRQRDRAAAAKNRIQHSQNSSGMGCRSRRADGAASPTPSDSSDSDISLGTHSPVPSSLQLQHSPGSTSNGANDREESLSVDDDKPRDLSGSLPLPLSLPLPLASPTHTPPQLPPGYGGGAGAGPGGPLTGPGCLPPFKLDAATSLFSAGCYLQSFSNLKEMSQQFPIQPIVLRPHPQLPQSLALNGASGGPPLHHPAYAAAYSVECVPGGHGPPHPPPKLRINSPEKLNSTAVAAAASVGGGGGNQHHEPTTTGYHHSGQLMLHRPFSTSPELKHSAPEIT</sequence>
<accession>Q95RW8</accession>
<accession>O76291</accession>
<accession>Q8MKN3</accession>
<accession>Q9UA64</accession>
<accession>Q9V355</accession>
<keyword id="KW-0025">Alternative splicing</keyword>
<keyword id="KW-0217">Developmental protein</keyword>
<keyword id="KW-0238">DNA-binding</keyword>
<keyword id="KW-0371">Homeobox</keyword>
<keyword id="KW-0539">Nucleus</keyword>
<keyword id="KW-1185">Reference proteome</keyword>
<dbReference type="EMBL" id="AF099184">
    <property type="protein sequence ID" value="AAD39863.1"/>
    <property type="molecule type" value="mRNA"/>
</dbReference>
<dbReference type="EMBL" id="AE013599">
    <property type="protein sequence ID" value="AAF59147.3"/>
    <property type="molecule type" value="Genomic_DNA"/>
</dbReference>
<dbReference type="EMBL" id="AE013599">
    <property type="protein sequence ID" value="AAM68882.1"/>
    <property type="molecule type" value="Genomic_DNA"/>
</dbReference>
<dbReference type="EMBL" id="AY061077">
    <property type="protein sequence ID" value="AAL28625.1"/>
    <property type="molecule type" value="mRNA"/>
</dbReference>
<dbReference type="EMBL" id="BT003802">
    <property type="protein sequence ID" value="AAO41485.1"/>
    <property type="molecule type" value="mRNA"/>
</dbReference>
<dbReference type="EMBL" id="AF050132">
    <property type="protein sequence ID" value="AAC33852.1"/>
    <property type="molecule type" value="mRNA"/>
</dbReference>
<dbReference type="RefSeq" id="NP_524695.2">
    <molecule id="Q95RW8-1"/>
    <property type="nucleotide sequence ID" value="NM_079956.3"/>
</dbReference>
<dbReference type="RefSeq" id="NP_724640.1">
    <molecule id="Q95RW8-3"/>
    <property type="nucleotide sequence ID" value="NM_165584.2"/>
</dbReference>
<dbReference type="SMR" id="Q95RW8"/>
<dbReference type="BioGRID" id="68835">
    <property type="interactions" value="8"/>
</dbReference>
<dbReference type="FunCoup" id="Q95RW8">
    <property type="interactions" value="16"/>
</dbReference>
<dbReference type="IntAct" id="Q95RW8">
    <property type="interactions" value="3"/>
</dbReference>
<dbReference type="STRING" id="7227.FBpp0302920"/>
<dbReference type="GlyGen" id="Q95RW8">
    <property type="glycosylation" value="2 sites"/>
</dbReference>
<dbReference type="PaxDb" id="7227-FBpp0087941"/>
<dbReference type="DNASU" id="44108"/>
<dbReference type="EnsemblMetazoa" id="FBtr0088865">
    <molecule id="Q95RW8-1"/>
    <property type="protein sequence ID" value="FBpp0087941"/>
    <property type="gene ID" value="FBgn0025360"/>
</dbReference>
<dbReference type="EnsemblMetazoa" id="FBtr0088866">
    <molecule id="Q95RW8-3"/>
    <property type="protein sequence ID" value="FBpp0087942"/>
    <property type="gene ID" value="FBgn0025360"/>
</dbReference>
<dbReference type="GeneID" id="44108"/>
<dbReference type="KEGG" id="dme:Dmel_CG18455"/>
<dbReference type="UCSC" id="CG18455-RA">
    <molecule id="Q95RW8-1"/>
    <property type="organism name" value="d. melanogaster"/>
</dbReference>
<dbReference type="AGR" id="FB:FBgn0025360"/>
<dbReference type="CTD" id="44108"/>
<dbReference type="FlyBase" id="FBgn0025360">
    <property type="gene designation" value="Optix"/>
</dbReference>
<dbReference type="VEuPathDB" id="VectorBase:FBgn0025360"/>
<dbReference type="eggNOG" id="KOG0775">
    <property type="taxonomic scope" value="Eukaryota"/>
</dbReference>
<dbReference type="GeneTree" id="ENSGT00940000169263"/>
<dbReference type="HOGENOM" id="CLU_032169_0_0_1"/>
<dbReference type="InParanoid" id="Q95RW8"/>
<dbReference type="OMA" id="RIQHNQN"/>
<dbReference type="OrthoDB" id="3501850at2759"/>
<dbReference type="PhylomeDB" id="Q95RW8"/>
<dbReference type="SignaLink" id="Q95RW8"/>
<dbReference type="BioGRID-ORCS" id="44108">
    <property type="hits" value="0 hits in 3 CRISPR screens"/>
</dbReference>
<dbReference type="ChiTaRS" id="Optix">
    <property type="organism name" value="fly"/>
</dbReference>
<dbReference type="GenomeRNAi" id="44108"/>
<dbReference type="PRO" id="PR:Q95RW8"/>
<dbReference type="Proteomes" id="UP000000803">
    <property type="component" value="Chromosome 2R"/>
</dbReference>
<dbReference type="Bgee" id="FBgn0025360">
    <property type="expression patterns" value="Expressed in epithelial cell in haltere and 137 other cell types or tissues"/>
</dbReference>
<dbReference type="ExpressionAtlas" id="Q95RW8">
    <property type="expression patterns" value="baseline and differential"/>
</dbReference>
<dbReference type="GO" id="GO:0005634">
    <property type="term" value="C:nucleus"/>
    <property type="evidence" value="ECO:0000318"/>
    <property type="project" value="GO_Central"/>
</dbReference>
<dbReference type="GO" id="GO:0005667">
    <property type="term" value="C:transcription regulator complex"/>
    <property type="evidence" value="ECO:0000318"/>
    <property type="project" value="GO_Central"/>
</dbReference>
<dbReference type="GO" id="GO:0000981">
    <property type="term" value="F:DNA-binding transcription factor activity, RNA polymerase II-specific"/>
    <property type="evidence" value="ECO:0000318"/>
    <property type="project" value="GO_Central"/>
</dbReference>
<dbReference type="GO" id="GO:0000978">
    <property type="term" value="F:RNA polymerase II cis-regulatory region sequence-specific DNA binding"/>
    <property type="evidence" value="ECO:0000318"/>
    <property type="project" value="GO_Central"/>
</dbReference>
<dbReference type="GO" id="GO:0043565">
    <property type="term" value="F:sequence-specific DNA binding"/>
    <property type="evidence" value="ECO:0000314"/>
    <property type="project" value="FlyBase"/>
</dbReference>
<dbReference type="GO" id="GO:0048749">
    <property type="term" value="P:compound eye development"/>
    <property type="evidence" value="ECO:0000315"/>
    <property type="project" value="FlyBase"/>
</dbReference>
<dbReference type="GO" id="GO:0001745">
    <property type="term" value="P:compound eye morphogenesis"/>
    <property type="evidence" value="ECO:0000315"/>
    <property type="project" value="FlyBase"/>
</dbReference>
<dbReference type="GO" id="GO:0001751">
    <property type="term" value="P:compound eye photoreceptor cell differentiation"/>
    <property type="evidence" value="ECO:0000315"/>
    <property type="project" value="FlyBase"/>
</dbReference>
<dbReference type="GO" id="GO:0048813">
    <property type="term" value="P:dendrite morphogenesis"/>
    <property type="evidence" value="ECO:0000315"/>
    <property type="project" value="FlyBase"/>
</dbReference>
<dbReference type="GO" id="GO:0007458">
    <property type="term" value="P:progression of morphogenetic furrow involved in compound eye morphogenesis"/>
    <property type="evidence" value="ECO:0000315"/>
    <property type="project" value="FlyBase"/>
</dbReference>
<dbReference type="GO" id="GO:0006357">
    <property type="term" value="P:regulation of transcription by RNA polymerase II"/>
    <property type="evidence" value="ECO:0000318"/>
    <property type="project" value="GO_Central"/>
</dbReference>
<dbReference type="CDD" id="cd00086">
    <property type="entry name" value="homeodomain"/>
    <property type="match status" value="1"/>
</dbReference>
<dbReference type="FunFam" id="1.10.10.60:FF:000046">
    <property type="entry name" value="SIX homeobox 3"/>
    <property type="match status" value="1"/>
</dbReference>
<dbReference type="Gene3D" id="1.10.10.60">
    <property type="entry name" value="Homeodomain-like"/>
    <property type="match status" value="1"/>
</dbReference>
<dbReference type="InterPro" id="IPR001356">
    <property type="entry name" value="HD"/>
</dbReference>
<dbReference type="InterPro" id="IPR009057">
    <property type="entry name" value="Homeodomain-like_sf"/>
</dbReference>
<dbReference type="InterPro" id="IPR031701">
    <property type="entry name" value="SIX1_SD"/>
</dbReference>
<dbReference type="PANTHER" id="PTHR10390">
    <property type="entry name" value="HOMEOBOX PROTEIN SIX"/>
    <property type="match status" value="1"/>
</dbReference>
<dbReference type="PANTHER" id="PTHR10390:SF33">
    <property type="entry name" value="PROTEIN OPTIX"/>
    <property type="match status" value="1"/>
</dbReference>
<dbReference type="Pfam" id="PF00046">
    <property type="entry name" value="Homeodomain"/>
    <property type="match status" value="1"/>
</dbReference>
<dbReference type="Pfam" id="PF16878">
    <property type="entry name" value="SIX1_SD"/>
    <property type="match status" value="1"/>
</dbReference>
<dbReference type="SMART" id="SM00389">
    <property type="entry name" value="HOX"/>
    <property type="match status" value="1"/>
</dbReference>
<dbReference type="SUPFAM" id="SSF46689">
    <property type="entry name" value="Homeodomain-like"/>
    <property type="match status" value="1"/>
</dbReference>
<dbReference type="PROSITE" id="PS50071">
    <property type="entry name" value="HOMEOBOX_2"/>
    <property type="match status" value="1"/>
</dbReference>
<organism evidence="8">
    <name type="scientific">Drosophila melanogaster</name>
    <name type="common">Fruit fly</name>
    <dbReference type="NCBI Taxonomy" id="7227"/>
    <lineage>
        <taxon>Eukaryota</taxon>
        <taxon>Metazoa</taxon>
        <taxon>Ecdysozoa</taxon>
        <taxon>Arthropoda</taxon>
        <taxon>Hexapoda</taxon>
        <taxon>Insecta</taxon>
        <taxon>Pterygota</taxon>
        <taxon>Neoptera</taxon>
        <taxon>Endopterygota</taxon>
        <taxon>Diptera</taxon>
        <taxon>Brachycera</taxon>
        <taxon>Muscomorpha</taxon>
        <taxon>Ephydroidea</taxon>
        <taxon>Drosophilidae</taxon>
        <taxon>Drosophila</taxon>
        <taxon>Sophophora</taxon>
    </lineage>
</organism>
<reference evidence="7" key="1">
    <citation type="journal article" date="1999" name="Mech. Dev.">
        <title>Six class homeobox genes in Drosophila belong to three distinct families and are involved in head development.</title>
        <authorList>
            <person name="Seo H.-C."/>
            <person name="Curtiss J."/>
            <person name="Mlodzik M."/>
            <person name="Fjose A."/>
        </authorList>
    </citation>
    <scope>NUCLEOTIDE SEQUENCE [MRNA] (ISOFORM B)</scope>
    <scope>FUNCTION</scope>
    <scope>TISSUE SPECIFICITY</scope>
    <scope>DEVELOPMENTAL STAGE</scope>
    <source>
        <strain>Canton-S</strain>
        <tissue>Larva</tissue>
    </source>
</reference>
<reference evidence="7" key="2">
    <citation type="journal article" date="2000" name="Science">
        <title>The genome sequence of Drosophila melanogaster.</title>
        <authorList>
            <person name="Adams M.D."/>
            <person name="Celniker S.E."/>
            <person name="Holt R.A."/>
            <person name="Evans C.A."/>
            <person name="Gocayne J.D."/>
            <person name="Amanatides P.G."/>
            <person name="Scherer S.E."/>
            <person name="Li P.W."/>
            <person name="Hoskins R.A."/>
            <person name="Galle R.F."/>
            <person name="George R.A."/>
            <person name="Lewis S.E."/>
            <person name="Richards S."/>
            <person name="Ashburner M."/>
            <person name="Henderson S.N."/>
            <person name="Sutton G.G."/>
            <person name="Wortman J.R."/>
            <person name="Yandell M.D."/>
            <person name="Zhang Q."/>
            <person name="Chen L.X."/>
            <person name="Brandon R.C."/>
            <person name="Rogers Y.-H.C."/>
            <person name="Blazej R.G."/>
            <person name="Champe M."/>
            <person name="Pfeiffer B.D."/>
            <person name="Wan K.H."/>
            <person name="Doyle C."/>
            <person name="Baxter E.G."/>
            <person name="Helt G."/>
            <person name="Nelson C.R."/>
            <person name="Miklos G.L.G."/>
            <person name="Abril J.F."/>
            <person name="Agbayani A."/>
            <person name="An H.-J."/>
            <person name="Andrews-Pfannkoch C."/>
            <person name="Baldwin D."/>
            <person name="Ballew R.M."/>
            <person name="Basu A."/>
            <person name="Baxendale J."/>
            <person name="Bayraktaroglu L."/>
            <person name="Beasley E.M."/>
            <person name="Beeson K.Y."/>
            <person name="Benos P.V."/>
            <person name="Berman B.P."/>
            <person name="Bhandari D."/>
            <person name="Bolshakov S."/>
            <person name="Borkova D."/>
            <person name="Botchan M.R."/>
            <person name="Bouck J."/>
            <person name="Brokstein P."/>
            <person name="Brottier P."/>
            <person name="Burtis K.C."/>
            <person name="Busam D.A."/>
            <person name="Butler H."/>
            <person name="Cadieu E."/>
            <person name="Center A."/>
            <person name="Chandra I."/>
            <person name="Cherry J.M."/>
            <person name="Cawley S."/>
            <person name="Dahlke C."/>
            <person name="Davenport L.B."/>
            <person name="Davies P."/>
            <person name="de Pablos B."/>
            <person name="Delcher A."/>
            <person name="Deng Z."/>
            <person name="Mays A.D."/>
            <person name="Dew I."/>
            <person name="Dietz S.M."/>
            <person name="Dodson K."/>
            <person name="Doup L.E."/>
            <person name="Downes M."/>
            <person name="Dugan-Rocha S."/>
            <person name="Dunkov B.C."/>
            <person name="Dunn P."/>
            <person name="Durbin K.J."/>
            <person name="Evangelista C.C."/>
            <person name="Ferraz C."/>
            <person name="Ferriera S."/>
            <person name="Fleischmann W."/>
            <person name="Fosler C."/>
            <person name="Gabrielian A.E."/>
            <person name="Garg N.S."/>
            <person name="Gelbart W.M."/>
            <person name="Glasser K."/>
            <person name="Glodek A."/>
            <person name="Gong F."/>
            <person name="Gorrell J.H."/>
            <person name="Gu Z."/>
            <person name="Guan P."/>
            <person name="Harris M."/>
            <person name="Harris N.L."/>
            <person name="Harvey D.A."/>
            <person name="Heiman T.J."/>
            <person name="Hernandez J.R."/>
            <person name="Houck J."/>
            <person name="Hostin D."/>
            <person name="Houston K.A."/>
            <person name="Howland T.J."/>
            <person name="Wei M.-H."/>
            <person name="Ibegwam C."/>
            <person name="Jalali M."/>
            <person name="Kalush F."/>
            <person name="Karpen G.H."/>
            <person name="Ke Z."/>
            <person name="Kennison J.A."/>
            <person name="Ketchum K.A."/>
            <person name="Kimmel B.E."/>
            <person name="Kodira C.D."/>
            <person name="Kraft C.L."/>
            <person name="Kravitz S."/>
            <person name="Kulp D."/>
            <person name="Lai Z."/>
            <person name="Lasko P."/>
            <person name="Lei Y."/>
            <person name="Levitsky A.A."/>
            <person name="Li J.H."/>
            <person name="Li Z."/>
            <person name="Liang Y."/>
            <person name="Lin X."/>
            <person name="Liu X."/>
            <person name="Mattei B."/>
            <person name="McIntosh T.C."/>
            <person name="McLeod M.P."/>
            <person name="McPherson D."/>
            <person name="Merkulov G."/>
            <person name="Milshina N.V."/>
            <person name="Mobarry C."/>
            <person name="Morris J."/>
            <person name="Moshrefi A."/>
            <person name="Mount S.M."/>
            <person name="Moy M."/>
            <person name="Murphy B."/>
            <person name="Murphy L."/>
            <person name="Muzny D.M."/>
            <person name="Nelson D.L."/>
            <person name="Nelson D.R."/>
            <person name="Nelson K.A."/>
            <person name="Nixon K."/>
            <person name="Nusskern D.R."/>
            <person name="Pacleb J.M."/>
            <person name="Palazzolo M."/>
            <person name="Pittman G.S."/>
            <person name="Pan S."/>
            <person name="Pollard J."/>
            <person name="Puri V."/>
            <person name="Reese M.G."/>
            <person name="Reinert K."/>
            <person name="Remington K."/>
            <person name="Saunders R.D.C."/>
            <person name="Scheeler F."/>
            <person name="Shen H."/>
            <person name="Shue B.C."/>
            <person name="Siden-Kiamos I."/>
            <person name="Simpson M."/>
            <person name="Skupski M.P."/>
            <person name="Smith T.J."/>
            <person name="Spier E."/>
            <person name="Spradling A.C."/>
            <person name="Stapleton M."/>
            <person name="Strong R."/>
            <person name="Sun E."/>
            <person name="Svirskas R."/>
            <person name="Tector C."/>
            <person name="Turner R."/>
            <person name="Venter E."/>
            <person name="Wang A.H."/>
            <person name="Wang X."/>
            <person name="Wang Z.-Y."/>
            <person name="Wassarman D.A."/>
            <person name="Weinstock G.M."/>
            <person name="Weissenbach J."/>
            <person name="Williams S.M."/>
            <person name="Woodage T."/>
            <person name="Worley K.C."/>
            <person name="Wu D."/>
            <person name="Yang S."/>
            <person name="Yao Q.A."/>
            <person name="Ye J."/>
            <person name="Yeh R.-F."/>
            <person name="Zaveri J.S."/>
            <person name="Zhan M."/>
            <person name="Zhang G."/>
            <person name="Zhao Q."/>
            <person name="Zheng L."/>
            <person name="Zheng X.H."/>
            <person name="Zhong F.N."/>
            <person name="Zhong W."/>
            <person name="Zhou X."/>
            <person name="Zhu S.C."/>
            <person name="Zhu X."/>
            <person name="Smith H.O."/>
            <person name="Gibbs R.A."/>
            <person name="Myers E.W."/>
            <person name="Rubin G.M."/>
            <person name="Venter J.C."/>
        </authorList>
    </citation>
    <scope>NUCLEOTIDE SEQUENCE [LARGE SCALE GENOMIC DNA]</scope>
    <source>
        <strain>Berkeley</strain>
    </source>
</reference>
<reference key="3">
    <citation type="journal article" date="2002" name="Genome Biol.">
        <title>Annotation of the Drosophila melanogaster euchromatic genome: a systematic review.</title>
        <authorList>
            <person name="Misra S."/>
            <person name="Crosby M.A."/>
            <person name="Mungall C.J."/>
            <person name="Matthews B.B."/>
            <person name="Campbell K.S."/>
            <person name="Hradecky P."/>
            <person name="Huang Y."/>
            <person name="Kaminker J.S."/>
            <person name="Millburn G.H."/>
            <person name="Prochnik S.E."/>
            <person name="Smith C.D."/>
            <person name="Tupy J.L."/>
            <person name="Whitfield E.J."/>
            <person name="Bayraktaroglu L."/>
            <person name="Berman B.P."/>
            <person name="Bettencourt B.R."/>
            <person name="Celniker S.E."/>
            <person name="de Grey A.D.N.J."/>
            <person name="Drysdale R.A."/>
            <person name="Harris N.L."/>
            <person name="Richter J."/>
            <person name="Russo S."/>
            <person name="Schroeder A.J."/>
            <person name="Shu S.Q."/>
            <person name="Stapleton M."/>
            <person name="Yamada C."/>
            <person name="Ashburner M."/>
            <person name="Gelbart W.M."/>
            <person name="Rubin G.M."/>
            <person name="Lewis S.E."/>
        </authorList>
    </citation>
    <scope>GENOME REANNOTATION</scope>
    <scope>ALTERNATIVE SPLICING</scope>
    <source>
        <strain>Berkeley</strain>
    </source>
</reference>
<reference key="4">
    <citation type="journal article" date="2002" name="Genome Biol.">
        <title>A Drosophila full-length cDNA resource.</title>
        <authorList>
            <person name="Stapleton M."/>
            <person name="Carlson J.W."/>
            <person name="Brokstein P."/>
            <person name="Yu C."/>
            <person name="Champe M."/>
            <person name="George R.A."/>
            <person name="Guarin H."/>
            <person name="Kronmiller B."/>
            <person name="Pacleb J.M."/>
            <person name="Park S."/>
            <person name="Wan K.H."/>
            <person name="Rubin G.M."/>
            <person name="Celniker S.E."/>
        </authorList>
    </citation>
    <scope>NUCLEOTIDE SEQUENCE [LARGE SCALE MRNA] (ISOFORM A)</scope>
    <source>
        <strain>Berkeley</strain>
        <tissue>Embryo</tissue>
    </source>
</reference>
<reference evidence="7" key="5">
    <citation type="submission" date="2003-02" db="EMBL/GenBank/DDBJ databases">
        <authorList>
            <person name="Stapleton M."/>
            <person name="Brokstein P."/>
            <person name="Hong L."/>
            <person name="Agbayani A."/>
            <person name="Carlson J.W."/>
            <person name="Champe M."/>
            <person name="Chavez C."/>
            <person name="Dorsett V."/>
            <person name="Dresnek D."/>
            <person name="Farfan D."/>
            <person name="Frise E."/>
            <person name="George R.A."/>
            <person name="Gonzalez M."/>
            <person name="Guarin H."/>
            <person name="Kronmiller B."/>
            <person name="Li P.W."/>
            <person name="Liao G."/>
            <person name="Miranda A."/>
            <person name="Mungall C.J."/>
            <person name="Nunoo J."/>
            <person name="Pacleb J.M."/>
            <person name="Paragas V."/>
            <person name="Park S."/>
            <person name="Patel S."/>
            <person name="Phouanenavong S."/>
            <person name="Wan K.H."/>
            <person name="Yu C."/>
            <person name="Lewis S.E."/>
            <person name="Rubin G.M."/>
            <person name="Celniker S.E."/>
        </authorList>
    </citation>
    <scope>NUCLEOTIDE SEQUENCE [LARGE SCALE MRNA] (ISOFORM C)</scope>
    <source>
        <strain>Berkeley</strain>
        <tissue>Embryo</tissue>
    </source>
</reference>
<reference evidence="7" key="6">
    <citation type="journal article" date="1998" name="Proc. Natl. Acad. Sci. U.S.A.">
        <title>The optx2 homeobox gene is expressed in early precursors of the eye and activates retina-specific genes.</title>
        <authorList>
            <person name="Toy J."/>
            <person name="Yang J.-M."/>
            <person name="Leppert G.S."/>
            <person name="Sundin O.H."/>
        </authorList>
    </citation>
    <scope>NUCLEOTIDE SEQUENCE [MRNA] OF 155-214 (ISOFORMS A/C)</scope>
    <scope>FUNCTION</scope>
    <scope>TISSUE SPECIFICITY</scope>
    <scope>DEVELOPMENTAL STAGE</scope>
</reference>
<gene>
    <name type="primary">Optix</name>
    <name type="synonym">opt</name>
    <name type="synonym">Six3</name>
    <name type="ORF">CG18455</name>
</gene>
<evidence type="ECO:0000255" key="1">
    <source>
        <dbReference type="PROSITE-ProRule" id="PRU00108"/>
    </source>
</evidence>
<evidence type="ECO:0000256" key="2">
    <source>
        <dbReference type="SAM" id="MobiDB-lite"/>
    </source>
</evidence>
<evidence type="ECO:0000269" key="3">
    <source>
    </source>
</evidence>
<evidence type="ECO:0000269" key="4">
    <source>
    </source>
</evidence>
<evidence type="ECO:0000303" key="5">
    <source>
    </source>
</evidence>
<evidence type="ECO:0000303" key="6">
    <source ref="5"/>
</evidence>
<evidence type="ECO:0000305" key="7"/>
<evidence type="ECO:0000312" key="8">
    <source>
        <dbReference type="EMBL" id="AAL28625.1"/>
    </source>
</evidence>
<proteinExistence type="evidence at transcript level"/>
<comment type="function">
    <text evidence="3 4">May be involved in head or eye development; development of the clypeolabrum and several head sensory organs.</text>
</comment>
<comment type="subcellular location">
    <subcellularLocation>
        <location evidence="1">Nucleus</location>
    </subcellularLocation>
</comment>
<comment type="alternative products">
    <event type="alternative splicing"/>
    <isoform>
        <id>Q95RW8-1</id>
        <name>A</name>
        <sequence type="displayed"/>
    </isoform>
    <isoform>
        <id>Q95RW8-2</id>
        <name>B</name>
        <sequence type="described" ref="VSP_002258"/>
    </isoform>
    <isoform>
        <id>Q95RW8-3</id>
        <name>C</name>
        <sequence type="described" ref="VSP_002259"/>
    </isoform>
</comment>
<comment type="tissue specificity">
    <text evidence="3 4">Expressed during early development of the head. First expressed in a band around the anterior end of stage 5 blastoderm embryo, at 93% to 85% egg length. By gastrula stage, site of expression shifts to the dorsal-anterior region. At stage 12, expression is found in the clypeolabrum, the stomodaeum, and in ectoderm dorsal to the future supraesophageal ganglion.</text>
</comment>
<comment type="developmental stage">
    <text evidence="3 4">Expressed during embryonic development.</text>
</comment>
<comment type="similarity">
    <text evidence="7">Belongs to the SIX/Sine oculis homeobox family.</text>
</comment>